<dbReference type="EMBL" id="AK054181">
    <property type="protein sequence ID" value="BAC35684.1"/>
    <property type="molecule type" value="mRNA"/>
</dbReference>
<dbReference type="EMBL" id="BC107250">
    <property type="protein sequence ID" value="AAI07251.1"/>
    <property type="molecule type" value="mRNA"/>
</dbReference>
<dbReference type="EMBL" id="BC107251">
    <property type="protein sequence ID" value="AAI07252.1"/>
    <property type="molecule type" value="mRNA"/>
</dbReference>
<dbReference type="CCDS" id="CCDS26561.1"/>
<dbReference type="RefSeq" id="NP_808477.2">
    <property type="nucleotide sequence ID" value="NM_177809.4"/>
</dbReference>
<dbReference type="RefSeq" id="XP_006517341.1">
    <property type="nucleotide sequence ID" value="XM_006517278.4"/>
</dbReference>
<dbReference type="RefSeq" id="XP_011242834.1">
    <property type="nucleotide sequence ID" value="XM_011244532.2"/>
</dbReference>
<dbReference type="SMR" id="Q8BW66"/>
<dbReference type="FunCoup" id="Q8BW66">
    <property type="interactions" value="309"/>
</dbReference>
<dbReference type="STRING" id="10090.ENSMUSP00000021971"/>
<dbReference type="iPTMnet" id="Q8BW66"/>
<dbReference type="PhosphoSitePlus" id="Q8BW66"/>
<dbReference type="jPOST" id="Q8BW66"/>
<dbReference type="PaxDb" id="10090-ENSMUSP00000021971"/>
<dbReference type="PeptideAtlas" id="Q8BW66"/>
<dbReference type="ProteomicsDB" id="260768"/>
<dbReference type="Antibodypedia" id="7244">
    <property type="antibodies" value="33 antibodies from 11 providers"/>
</dbReference>
<dbReference type="DNASU" id="328258"/>
<dbReference type="Ensembl" id="ENSMUST00000021971.6">
    <property type="protein sequence ID" value="ENSMUSP00000021971.6"/>
    <property type="gene ID" value="ENSMUSG00000021509.6"/>
</dbReference>
<dbReference type="GeneID" id="328258"/>
<dbReference type="KEGG" id="mmu:328258"/>
<dbReference type="UCSC" id="uc007qsn.2">
    <property type="organism name" value="mouse"/>
</dbReference>
<dbReference type="AGR" id="MGI:2145373"/>
<dbReference type="CTD" id="153328"/>
<dbReference type="MGI" id="MGI:2145373">
    <property type="gene designation" value="Slc25a48"/>
</dbReference>
<dbReference type="VEuPathDB" id="HostDB:ENSMUSG00000021509"/>
<dbReference type="eggNOG" id="KOG0752">
    <property type="taxonomic scope" value="Eukaryota"/>
</dbReference>
<dbReference type="eggNOG" id="KOG0758">
    <property type="taxonomic scope" value="Eukaryota"/>
</dbReference>
<dbReference type="GeneTree" id="ENSGT00940000159354"/>
<dbReference type="HOGENOM" id="CLU_015166_16_1_1"/>
<dbReference type="InParanoid" id="Q8BW66"/>
<dbReference type="OMA" id="VWFLAFE"/>
<dbReference type="OrthoDB" id="193856at2759"/>
<dbReference type="PhylomeDB" id="Q8BW66"/>
<dbReference type="TreeFam" id="TF351739"/>
<dbReference type="BioGRID-ORCS" id="328258">
    <property type="hits" value="1 hit in 76 CRISPR screens"/>
</dbReference>
<dbReference type="ChiTaRS" id="Slc25a48">
    <property type="organism name" value="mouse"/>
</dbReference>
<dbReference type="PRO" id="PR:Q8BW66"/>
<dbReference type="Proteomes" id="UP000000589">
    <property type="component" value="Chromosome 13"/>
</dbReference>
<dbReference type="RNAct" id="Q8BW66">
    <property type="molecule type" value="protein"/>
</dbReference>
<dbReference type="Bgee" id="ENSMUSG00000021509">
    <property type="expression patterns" value="Expressed in animal zygote and 55 other cell types or tissues"/>
</dbReference>
<dbReference type="GO" id="GO:0005743">
    <property type="term" value="C:mitochondrial inner membrane"/>
    <property type="evidence" value="ECO:0007669"/>
    <property type="project" value="UniProtKB-SubCell"/>
</dbReference>
<dbReference type="GO" id="GO:0005739">
    <property type="term" value="C:mitochondrion"/>
    <property type="evidence" value="ECO:0007005"/>
    <property type="project" value="MGI"/>
</dbReference>
<dbReference type="FunFam" id="1.50.40.10:FF:000058">
    <property type="entry name" value="Solute carrier family 25 member 48"/>
    <property type="match status" value="1"/>
</dbReference>
<dbReference type="Gene3D" id="1.50.40.10">
    <property type="entry name" value="Mitochondrial carrier domain"/>
    <property type="match status" value="2"/>
</dbReference>
<dbReference type="InterPro" id="IPR050567">
    <property type="entry name" value="Mitochondrial_Carrier"/>
</dbReference>
<dbReference type="InterPro" id="IPR018108">
    <property type="entry name" value="Mitochondrial_sb/sol_carrier"/>
</dbReference>
<dbReference type="InterPro" id="IPR023395">
    <property type="entry name" value="Mt_carrier_dom_sf"/>
</dbReference>
<dbReference type="PANTHER" id="PTHR45624">
    <property type="entry name" value="MITOCHONDRIAL BASIC AMINO ACIDS TRANSPORTER-RELATED"/>
    <property type="match status" value="1"/>
</dbReference>
<dbReference type="PANTHER" id="PTHR45624:SF7">
    <property type="entry name" value="SOLUTE CARRIER FAMILY 25 MEMBER 48"/>
    <property type="match status" value="1"/>
</dbReference>
<dbReference type="Pfam" id="PF00153">
    <property type="entry name" value="Mito_carr"/>
    <property type="match status" value="3"/>
</dbReference>
<dbReference type="SUPFAM" id="SSF103506">
    <property type="entry name" value="Mitochondrial carrier"/>
    <property type="match status" value="1"/>
</dbReference>
<dbReference type="PROSITE" id="PS50920">
    <property type="entry name" value="SOLCAR"/>
    <property type="match status" value="3"/>
</dbReference>
<feature type="chain" id="PRO_0000325769" description="Solute carrier family 25 member 48">
    <location>
        <begin position="1"/>
        <end position="306"/>
    </location>
</feature>
<feature type="transmembrane region" description="Helical; Name=1" evidence="2">
    <location>
        <begin position="9"/>
        <end position="29"/>
    </location>
</feature>
<feature type="transmembrane region" description="Helical; Name=2" evidence="2">
    <location>
        <begin position="61"/>
        <end position="81"/>
    </location>
</feature>
<feature type="transmembrane region" description="Helical; Name=3" evidence="2">
    <location>
        <begin position="107"/>
        <end position="127"/>
    </location>
</feature>
<feature type="transmembrane region" description="Helical; Name=4" evidence="2">
    <location>
        <begin position="184"/>
        <end position="204"/>
    </location>
</feature>
<feature type="transmembrane region" description="Helical; Name=5" evidence="2">
    <location>
        <begin position="212"/>
        <end position="232"/>
    </location>
</feature>
<feature type="transmembrane region" description="Helical; Name=6" evidence="2">
    <location>
        <begin position="272"/>
        <end position="290"/>
    </location>
</feature>
<feature type="repeat" description="Solcar 1">
    <location>
        <begin position="3"/>
        <end position="86"/>
    </location>
</feature>
<feature type="repeat" description="Solcar 2">
    <location>
        <begin position="101"/>
        <end position="200"/>
    </location>
</feature>
<feature type="repeat" description="Solcar 3">
    <location>
        <begin position="209"/>
        <end position="296"/>
    </location>
</feature>
<feature type="sequence conflict" description="In Ref. 1; BAC35684." evidence="3" ref="1">
    <original>S</original>
    <variation>N</variation>
    <location>
        <position position="177"/>
    </location>
</feature>
<accession>Q8BW66</accession>
<accession>Q3KNJ4</accession>
<protein>
    <recommendedName>
        <fullName>Solute carrier family 25 member 48</fullName>
    </recommendedName>
</protein>
<gene>
    <name type="primary">Slc25a48</name>
</gene>
<name>S2548_MOUSE</name>
<proteinExistence type="evidence at protein level"/>
<comment type="subcellular location">
    <subcellularLocation>
        <location evidence="1">Mitochondrion inner membrane</location>
        <topology evidence="1">Multi-pass membrane protein</topology>
    </subcellularLocation>
</comment>
<comment type="similarity">
    <text evidence="3">Belongs to the mitochondrial carrier (TC 2.A.29) family.</text>
</comment>
<keyword id="KW-0472">Membrane</keyword>
<keyword id="KW-0496">Mitochondrion</keyword>
<keyword id="KW-0999">Mitochondrion inner membrane</keyword>
<keyword id="KW-1185">Reference proteome</keyword>
<keyword id="KW-0677">Repeat</keyword>
<keyword id="KW-0812">Transmembrane</keyword>
<keyword id="KW-1133">Transmembrane helix</keyword>
<keyword id="KW-0813">Transport</keyword>
<evidence type="ECO:0000250" key="1"/>
<evidence type="ECO:0000255" key="2"/>
<evidence type="ECO:0000305" key="3"/>
<organism>
    <name type="scientific">Mus musculus</name>
    <name type="common">Mouse</name>
    <dbReference type="NCBI Taxonomy" id="10090"/>
    <lineage>
        <taxon>Eukaryota</taxon>
        <taxon>Metazoa</taxon>
        <taxon>Chordata</taxon>
        <taxon>Craniata</taxon>
        <taxon>Vertebrata</taxon>
        <taxon>Euteleostomi</taxon>
        <taxon>Mammalia</taxon>
        <taxon>Eutheria</taxon>
        <taxon>Euarchontoglires</taxon>
        <taxon>Glires</taxon>
        <taxon>Rodentia</taxon>
        <taxon>Myomorpha</taxon>
        <taxon>Muroidea</taxon>
        <taxon>Muridae</taxon>
        <taxon>Murinae</taxon>
        <taxon>Mus</taxon>
        <taxon>Mus</taxon>
    </lineage>
</organism>
<reference key="1">
    <citation type="journal article" date="2005" name="Science">
        <title>The transcriptional landscape of the mammalian genome.</title>
        <authorList>
            <person name="Carninci P."/>
            <person name="Kasukawa T."/>
            <person name="Katayama S."/>
            <person name="Gough J."/>
            <person name="Frith M.C."/>
            <person name="Maeda N."/>
            <person name="Oyama R."/>
            <person name="Ravasi T."/>
            <person name="Lenhard B."/>
            <person name="Wells C."/>
            <person name="Kodzius R."/>
            <person name="Shimokawa K."/>
            <person name="Bajic V.B."/>
            <person name="Brenner S.E."/>
            <person name="Batalov S."/>
            <person name="Forrest A.R."/>
            <person name="Zavolan M."/>
            <person name="Davis M.J."/>
            <person name="Wilming L.G."/>
            <person name="Aidinis V."/>
            <person name="Allen J.E."/>
            <person name="Ambesi-Impiombato A."/>
            <person name="Apweiler R."/>
            <person name="Aturaliya R.N."/>
            <person name="Bailey T.L."/>
            <person name="Bansal M."/>
            <person name="Baxter L."/>
            <person name="Beisel K.W."/>
            <person name="Bersano T."/>
            <person name="Bono H."/>
            <person name="Chalk A.M."/>
            <person name="Chiu K.P."/>
            <person name="Choudhary V."/>
            <person name="Christoffels A."/>
            <person name="Clutterbuck D.R."/>
            <person name="Crowe M.L."/>
            <person name="Dalla E."/>
            <person name="Dalrymple B.P."/>
            <person name="de Bono B."/>
            <person name="Della Gatta G."/>
            <person name="di Bernardo D."/>
            <person name="Down T."/>
            <person name="Engstrom P."/>
            <person name="Fagiolini M."/>
            <person name="Faulkner G."/>
            <person name="Fletcher C.F."/>
            <person name="Fukushima T."/>
            <person name="Furuno M."/>
            <person name="Futaki S."/>
            <person name="Gariboldi M."/>
            <person name="Georgii-Hemming P."/>
            <person name="Gingeras T.R."/>
            <person name="Gojobori T."/>
            <person name="Green R.E."/>
            <person name="Gustincich S."/>
            <person name="Harbers M."/>
            <person name="Hayashi Y."/>
            <person name="Hensch T.K."/>
            <person name="Hirokawa N."/>
            <person name="Hill D."/>
            <person name="Huminiecki L."/>
            <person name="Iacono M."/>
            <person name="Ikeo K."/>
            <person name="Iwama A."/>
            <person name="Ishikawa T."/>
            <person name="Jakt M."/>
            <person name="Kanapin A."/>
            <person name="Katoh M."/>
            <person name="Kawasawa Y."/>
            <person name="Kelso J."/>
            <person name="Kitamura H."/>
            <person name="Kitano H."/>
            <person name="Kollias G."/>
            <person name="Krishnan S.P."/>
            <person name="Kruger A."/>
            <person name="Kummerfeld S.K."/>
            <person name="Kurochkin I.V."/>
            <person name="Lareau L.F."/>
            <person name="Lazarevic D."/>
            <person name="Lipovich L."/>
            <person name="Liu J."/>
            <person name="Liuni S."/>
            <person name="McWilliam S."/>
            <person name="Madan Babu M."/>
            <person name="Madera M."/>
            <person name="Marchionni L."/>
            <person name="Matsuda H."/>
            <person name="Matsuzawa S."/>
            <person name="Miki H."/>
            <person name="Mignone F."/>
            <person name="Miyake S."/>
            <person name="Morris K."/>
            <person name="Mottagui-Tabar S."/>
            <person name="Mulder N."/>
            <person name="Nakano N."/>
            <person name="Nakauchi H."/>
            <person name="Ng P."/>
            <person name="Nilsson R."/>
            <person name="Nishiguchi S."/>
            <person name="Nishikawa S."/>
            <person name="Nori F."/>
            <person name="Ohara O."/>
            <person name="Okazaki Y."/>
            <person name="Orlando V."/>
            <person name="Pang K.C."/>
            <person name="Pavan W.J."/>
            <person name="Pavesi G."/>
            <person name="Pesole G."/>
            <person name="Petrovsky N."/>
            <person name="Piazza S."/>
            <person name="Reed J."/>
            <person name="Reid J.F."/>
            <person name="Ring B.Z."/>
            <person name="Ringwald M."/>
            <person name="Rost B."/>
            <person name="Ruan Y."/>
            <person name="Salzberg S.L."/>
            <person name="Sandelin A."/>
            <person name="Schneider C."/>
            <person name="Schoenbach C."/>
            <person name="Sekiguchi K."/>
            <person name="Semple C.A."/>
            <person name="Seno S."/>
            <person name="Sessa L."/>
            <person name="Sheng Y."/>
            <person name="Shibata Y."/>
            <person name="Shimada H."/>
            <person name="Shimada K."/>
            <person name="Silva D."/>
            <person name="Sinclair B."/>
            <person name="Sperling S."/>
            <person name="Stupka E."/>
            <person name="Sugiura K."/>
            <person name="Sultana R."/>
            <person name="Takenaka Y."/>
            <person name="Taki K."/>
            <person name="Tammoja K."/>
            <person name="Tan S.L."/>
            <person name="Tang S."/>
            <person name="Taylor M.S."/>
            <person name="Tegner J."/>
            <person name="Teichmann S.A."/>
            <person name="Ueda H.R."/>
            <person name="van Nimwegen E."/>
            <person name="Verardo R."/>
            <person name="Wei C.L."/>
            <person name="Yagi K."/>
            <person name="Yamanishi H."/>
            <person name="Zabarovsky E."/>
            <person name="Zhu S."/>
            <person name="Zimmer A."/>
            <person name="Hide W."/>
            <person name="Bult C."/>
            <person name="Grimmond S.M."/>
            <person name="Teasdale R.D."/>
            <person name="Liu E.T."/>
            <person name="Brusic V."/>
            <person name="Quackenbush J."/>
            <person name="Wahlestedt C."/>
            <person name="Mattick J.S."/>
            <person name="Hume D.A."/>
            <person name="Kai C."/>
            <person name="Sasaki D."/>
            <person name="Tomaru Y."/>
            <person name="Fukuda S."/>
            <person name="Kanamori-Katayama M."/>
            <person name="Suzuki M."/>
            <person name="Aoki J."/>
            <person name="Arakawa T."/>
            <person name="Iida J."/>
            <person name="Imamura K."/>
            <person name="Itoh M."/>
            <person name="Kato T."/>
            <person name="Kawaji H."/>
            <person name="Kawagashira N."/>
            <person name="Kawashima T."/>
            <person name="Kojima M."/>
            <person name="Kondo S."/>
            <person name="Konno H."/>
            <person name="Nakano K."/>
            <person name="Ninomiya N."/>
            <person name="Nishio T."/>
            <person name="Okada M."/>
            <person name="Plessy C."/>
            <person name="Shibata K."/>
            <person name="Shiraki T."/>
            <person name="Suzuki S."/>
            <person name="Tagami M."/>
            <person name="Waki K."/>
            <person name="Watahiki A."/>
            <person name="Okamura-Oho Y."/>
            <person name="Suzuki H."/>
            <person name="Kawai J."/>
            <person name="Hayashizaki Y."/>
        </authorList>
    </citation>
    <scope>NUCLEOTIDE SEQUENCE [LARGE SCALE MRNA]</scope>
    <source>
        <strain>C57BL/6J</strain>
        <tissue>Oviduct</tissue>
    </source>
</reference>
<reference key="2">
    <citation type="journal article" date="2004" name="Genome Res.">
        <title>The status, quality, and expansion of the NIH full-length cDNA project: the Mammalian Gene Collection (MGC).</title>
        <authorList>
            <consortium name="The MGC Project Team"/>
        </authorList>
    </citation>
    <scope>NUCLEOTIDE SEQUENCE [LARGE SCALE MRNA]</scope>
</reference>
<reference key="3">
    <citation type="journal article" date="2010" name="Cell">
        <title>A tissue-specific atlas of mouse protein phosphorylation and expression.</title>
        <authorList>
            <person name="Huttlin E.L."/>
            <person name="Jedrychowski M.P."/>
            <person name="Elias J.E."/>
            <person name="Goswami T."/>
            <person name="Rad R."/>
            <person name="Beausoleil S.A."/>
            <person name="Villen J."/>
            <person name="Haas W."/>
            <person name="Sowa M.E."/>
            <person name="Gygi S.P."/>
        </authorList>
    </citation>
    <scope>IDENTIFICATION BY MASS SPECTROMETRY [LARGE SCALE ANALYSIS]</scope>
    <source>
        <tissue>Brown adipose tissue</tissue>
    </source>
</reference>
<sequence length="306" mass="33387">MGSFQLEDFVAGWIGGVASVIVGYPLDTVKTRLQAGVGYANTFNCIRMVYKRERVFGFFKGMSFPLASIAIYNSVVFGVFSNTQRFLSKYRCGELEAGPGRSLSDLLLASMLTGVVSVGLGGPVELIKIRLQMQTQPFREASHGLKSRAVAAYQGPVHCIATIVQMEGLTGLYRGASAMLLRDIPGYCFYFIPYVFLSEWITPEACTGPSPYAAWLAGGIAGAISWGTATPMDVVKSRIQADGVYLNKYRGVVDCISQSYQQEGFKVFFRGITVNAVRGFPMSAAMFLGYELSLKALRGEHTVRSE</sequence>